<sequence>MSEKPLTKTDYLMRLRRCQTIDTLERVIEKNKYELSDNELAVFYSAADHRLAELTMNKLYDKIPSSVWKFIR</sequence>
<evidence type="ECO:0000269" key="1">
    <source>
    </source>
</evidence>
<evidence type="ECO:0000269" key="2">
    <source>
    </source>
</evidence>
<evidence type="ECO:0000269" key="3">
    <source>
    </source>
</evidence>
<evidence type="ECO:0000269" key="4">
    <source>
    </source>
</evidence>
<evidence type="ECO:0000269" key="5">
    <source>
    </source>
</evidence>
<evidence type="ECO:0000269" key="6">
    <source>
    </source>
</evidence>
<evidence type="ECO:0000269" key="7">
    <source>
    </source>
</evidence>
<evidence type="ECO:0000269" key="8">
    <source>
    </source>
</evidence>
<evidence type="ECO:0000269" key="9">
    <source>
    </source>
</evidence>
<evidence type="ECO:0000269" key="10">
    <source>
    </source>
</evidence>
<evidence type="ECO:0000269" key="11">
    <source>
    </source>
</evidence>
<evidence type="ECO:0000269" key="12">
    <source>
    </source>
</evidence>
<evidence type="ECO:0000269" key="13">
    <source>
    </source>
</evidence>
<evidence type="ECO:0000305" key="14"/>
<evidence type="ECO:0000305" key="15">
    <source>
    </source>
</evidence>
<evidence type="ECO:0000305" key="16">
    <source>
    </source>
</evidence>
<evidence type="ECO:0000305" key="17">
    <source>
    </source>
</evidence>
<evidence type="ECO:0007829" key="18">
    <source>
        <dbReference type="PDB" id="1JW2"/>
    </source>
</evidence>
<feature type="chain" id="PRO_0000201727" description="Hemolysin expression-modulating protein Hha">
    <location>
        <begin position="1"/>
        <end position="72"/>
    </location>
</feature>
<feature type="site" description="Interacts with H-NS">
    <location>
        <position position="25"/>
    </location>
</feature>
<feature type="site" description="Interacts with H-NS">
    <location>
        <position position="48"/>
    </location>
</feature>
<feature type="mutagenesis site" description="Does not affect H-NS binding ability." evidence="10">
    <original>D</original>
    <variation>N</variation>
    <location>
        <position position="10"/>
    </location>
</feature>
<feature type="mutagenesis site" description="Derepression of the hly operon, impaired H-NS binding." evidence="3">
    <original>R</original>
    <variation>C</variation>
    <location>
        <position position="16"/>
    </location>
</feature>
<feature type="mutagenesis site" description="Does not affect H-NS binding ability." evidence="10">
    <original>D</original>
    <variation>N</variation>
    <location>
        <position position="22"/>
    </location>
</feature>
<feature type="mutagenesis site" description="Affects H-NS binding ability. Decrease in the ability to repress the expression of the hly operon." evidence="10">
    <original>E</original>
    <variation>Q</variation>
    <location>
        <position position="25"/>
    </location>
</feature>
<feature type="mutagenesis site" description="Does not affect H-NS binding ability." evidence="10">
    <original>E</original>
    <variation>Q</variation>
    <location>
        <position position="29"/>
    </location>
</feature>
<feature type="mutagenesis site" description="Does not affect H-NS binding ability." evidence="10">
    <original>E</original>
    <variation>Q</variation>
    <location>
        <position position="34"/>
    </location>
</feature>
<feature type="mutagenesis site" description="Does not affect H-NS binding ability." evidence="10">
    <original>D</original>
    <variation>N</variation>
    <location>
        <position position="37"/>
    </location>
</feature>
<feature type="mutagenesis site" description="Does not affect H-NS binding ability." evidence="10">
    <original>E</original>
    <variation>Q</variation>
    <location>
        <position position="39"/>
    </location>
</feature>
<feature type="mutagenesis site" description="Derepression of the hly operon, impaired H-NS binding." evidence="3">
    <location>
        <begin position="44"/>
        <end position="72"/>
    </location>
</feature>
<feature type="mutagenesis site" description="Abolishes the interaction with H-NS." evidence="10">
    <original>D</original>
    <variation>E</variation>
    <variation>R</variation>
    <location>
        <position position="48"/>
    </location>
</feature>
<feature type="mutagenesis site" description="Abolishes the interaction with H-NS. Loss of the ability to repress the expression of the hly operon." evidence="10">
    <original>D</original>
    <variation>N</variation>
    <location>
        <position position="48"/>
    </location>
</feature>
<feature type="mutagenesis site" description="Derepression of the hly operon, impaired H-NS binding." evidence="3">
    <original>R</original>
    <variation>H</variation>
    <location>
        <position position="50"/>
    </location>
</feature>
<feature type="mutagenesis site" description="Derepression of the hly operon, impaired H-NS binding." evidence="3">
    <location>
        <begin position="58"/>
        <end position="72"/>
    </location>
</feature>
<feature type="mutagenesis site" description="Does not affect H-NS binding ability." evidence="10">
    <original>D</original>
    <variation>N</variation>
    <location>
        <position position="61"/>
    </location>
</feature>
<feature type="mutagenesis site" description="Derepression of the hly operon, impaired H-NS binding." evidence="3">
    <original>P</original>
    <variation>L</variation>
    <variation>S</variation>
    <location>
        <position position="64"/>
    </location>
</feature>
<feature type="mutagenesis site" description="Derepression of the hly operon, impaired H-NS binding." evidence="3">
    <original>R</original>
    <variation>RHHHHHH</variation>
    <location>
        <position position="72"/>
    </location>
</feature>
<feature type="helix" evidence="18">
    <location>
        <begin position="8"/>
        <end position="16"/>
    </location>
</feature>
<feature type="helix" evidence="18">
    <location>
        <begin position="21"/>
        <end position="34"/>
    </location>
</feature>
<feature type="helix" evidence="18">
    <location>
        <begin position="37"/>
        <end position="55"/>
    </location>
</feature>
<feature type="strand" evidence="18">
    <location>
        <begin position="56"/>
        <end position="58"/>
    </location>
</feature>
<feature type="helix" evidence="18">
    <location>
        <begin position="65"/>
        <end position="70"/>
    </location>
</feature>
<gene>
    <name type="primary">hha</name>
    <name type="ordered locus">b0460</name>
    <name type="ordered locus">JW0449</name>
</gene>
<protein>
    <recommendedName>
        <fullName>Hemolysin expression-modulating protein Hha</fullName>
    </recommendedName>
</protein>
<organism>
    <name type="scientific">Escherichia coli (strain K12)</name>
    <dbReference type="NCBI Taxonomy" id="83333"/>
    <lineage>
        <taxon>Bacteria</taxon>
        <taxon>Pseudomonadati</taxon>
        <taxon>Pseudomonadota</taxon>
        <taxon>Gammaproteobacteria</taxon>
        <taxon>Enterobacterales</taxon>
        <taxon>Enterobacteriaceae</taxon>
        <taxon>Escherichia</taxon>
    </lineage>
</organism>
<comment type="function">
    <text evidence="2 3 5 7 8 9 10 11 13">Down-regulates hemolysin (hly) expression in complex with H-NS (PubMed:10778755, PubMed:11790731, PubMed:1956303, PubMed:21600204). Stimulates transposition events in vivo (PubMed:8145648). Modifies the set of genes regulated by H-NS; Hha and Cnu (YdgT) increase the number of genes DNA bound by H-NS/StpA and may also modulate the oligomerization of the H-NS/StpA-complex (PubMed:23543115). Binds DNA and influences DNA topology in response to environmental stimuli; does not however interact with DNA in the absence of H-NS (PubMed:23543115). Involved in persister cell formation, acting downstream of mRNA interferase (toxin) MqsR (PubMed:19909729). Decreases biofilm formation by repressing the transcription of fimbrial genes fimA and ihfA, and by repressing the transcription of tRNAs corresponding to rare codons, which are abundant in type 1 fimbrial genes (PubMed:18545668).</text>
</comment>
<comment type="subunit">
    <text evidence="2 3 6 10 12">Forms a heterotrimeric complex with the H-NS dimer in the absence of DNA.</text>
</comment>
<comment type="interaction">
    <interactant intactId="EBI-1122578">
        <id>P0ACE3</id>
    </interactant>
    <interactant intactId="EBI-544934">
        <id>P0ACF8</id>
        <label>hns</label>
    </interactant>
    <organismsDiffer>false</organismsDiffer>
    <experiments>5</experiments>
</comment>
<comment type="induction">
    <text evidence="4 7 14">Expression is autoregulated (Probable). Induced during biofilm formation (PubMed:14727089, PubMed:18545668).</text>
</comment>
<comment type="domain">
    <text evidence="3">Histidine-tagging (His-tagging) at the N-terminus does not impair interaction with H-NS, whereas His-tagging at the C-terminus does impair interaction (PubMed:11790731).</text>
</comment>
<comment type="disruption phenotype">
    <text evidence="1 5 8 9 11">Deletion results in a large increase in the production of extracellular and intracellular hemolysin (PubMed:1956303). At low osmolarity minor changes in overall translation, at 0.4 M NaCl expression of about 25 proteins altered, including decreased OmpA, crr and AhpC (in strain 5K, not a K12 derivative) (PubMed:10322001). At 0.3 M NaCl in strain W3110 up-regulation of 113 genes and down-regulation of 8 genes was observed; a double cnu-hha deletion up-regulated 134 and down-regulated 5 genes, most of which are thought to have been acquired horizontally and are also up-regulated in double hns-stpA deletions (PubMed:23543115). However there are only 12 genes that were commonly up-regulated in the hha and cnu-hha deletions (PubMed:23543115). Represses the production of persister cells (PubMed:19909729). Deletion of hha and tomB (ybaJ), in the presence of a conjugative plasmid (R1drd19), decreases biofilm formation, cell aggregation and increases motility via flagella and motility gene expression (PubMed:16317765).</text>
</comment>
<comment type="miscellaneous">
    <text evidence="16">Hha and TomB may form a type II toxin-antitoxin (TA) system (PubMed:18545668).</text>
</comment>
<comment type="similarity">
    <text evidence="15 17">Belongs to the Hha/YmoA/Cnu family.</text>
</comment>
<comment type="sequence caution" evidence="14">
    <conflict type="erroneous initiation">
        <sequence resource="EMBL-CDS" id="AAB40215"/>
    </conflict>
    <text>Extended N-terminus.</text>
</comment>
<keyword id="KW-0002">3D-structure</keyword>
<keyword id="KW-1185">Reference proteome</keyword>
<keyword id="KW-0678">Repressor</keyword>
<keyword id="KW-0804">Transcription</keyword>
<keyword id="KW-0805">Transcription regulation</keyword>
<reference key="1">
    <citation type="journal article" date="1991" name="Mol. Microbiol.">
        <title>The hha gene modulates haemolysin expression in Escherichia coli.</title>
        <authorList>
            <person name="Nieto J.M."/>
            <person name="Carmona M."/>
            <person name="Bolland S."/>
            <person name="Jubete Y."/>
            <person name="de la Cruz F."/>
            <person name="Juarez A."/>
        </authorList>
    </citation>
    <scope>NUCLEOTIDE SEQUENCE [GENOMIC DNA]</scope>
    <scope>FUNCTION IN HEMOLYSIN PRODUCTION</scope>
    <scope>DISRUPTION PHENOTYPE</scope>
    <source>
        <strain>K12 / C600 / CR34 / ATCC 23724 / DSM 3925 / LMG 3041 / NCIB 10222</strain>
    </source>
</reference>
<reference key="2">
    <citation type="submission" date="1997-01" db="EMBL/GenBank/DDBJ databases">
        <title>Sequence of minutes 4-25 of Escherichia coli.</title>
        <authorList>
            <person name="Chung E."/>
            <person name="Allen E."/>
            <person name="Araujo R."/>
            <person name="Aparicio A.M."/>
            <person name="Davis K."/>
            <person name="Duncan M."/>
            <person name="Federspiel N."/>
            <person name="Hyman R."/>
            <person name="Kalman S."/>
            <person name="Komp C."/>
            <person name="Kurdi O."/>
            <person name="Lew H."/>
            <person name="Lin D."/>
            <person name="Namath A."/>
            <person name="Oefner P."/>
            <person name="Roberts D."/>
            <person name="Schramm S."/>
            <person name="Davis R.W."/>
        </authorList>
    </citation>
    <scope>NUCLEOTIDE SEQUENCE [LARGE SCALE GENOMIC DNA]</scope>
    <source>
        <strain>K12 / MG1655 / ATCC 47076</strain>
    </source>
</reference>
<reference key="3">
    <citation type="journal article" date="1997" name="Science">
        <title>The complete genome sequence of Escherichia coli K-12.</title>
        <authorList>
            <person name="Blattner F.R."/>
            <person name="Plunkett G. III"/>
            <person name="Bloch C.A."/>
            <person name="Perna N.T."/>
            <person name="Burland V."/>
            <person name="Riley M."/>
            <person name="Collado-Vides J."/>
            <person name="Glasner J.D."/>
            <person name="Rode C.K."/>
            <person name="Mayhew G.F."/>
            <person name="Gregor J."/>
            <person name="Davis N.W."/>
            <person name="Kirkpatrick H.A."/>
            <person name="Goeden M.A."/>
            <person name="Rose D.J."/>
            <person name="Mau B."/>
            <person name="Shao Y."/>
        </authorList>
    </citation>
    <scope>NUCLEOTIDE SEQUENCE [LARGE SCALE GENOMIC DNA]</scope>
    <source>
        <strain>K12 / MG1655 / ATCC 47076</strain>
    </source>
</reference>
<reference key="4">
    <citation type="journal article" date="2006" name="Mol. Syst. Biol.">
        <title>Highly accurate genome sequences of Escherichia coli K-12 strains MG1655 and W3110.</title>
        <authorList>
            <person name="Hayashi K."/>
            <person name="Morooka N."/>
            <person name="Yamamoto Y."/>
            <person name="Fujita K."/>
            <person name="Isono K."/>
            <person name="Choi S."/>
            <person name="Ohtsubo E."/>
            <person name="Baba T."/>
            <person name="Wanner B.L."/>
            <person name="Mori H."/>
            <person name="Horiuchi T."/>
        </authorList>
    </citation>
    <scope>NUCLEOTIDE SEQUENCE [LARGE SCALE GENOMIC DNA]</scope>
    <source>
        <strain>K12 / W3110 / ATCC 27325 / DSM 5911</strain>
    </source>
</reference>
<reference key="5">
    <citation type="journal article" date="1992" name="Mol. Microbiol.">
        <title>The Hha protein from Escherichia coli is highly homologous to the YmoA protein from Yersinia enterocolitica.</title>
        <authorList>
            <person name="de la Cruz F."/>
            <person name="Carmona M."/>
            <person name="Juarez A."/>
        </authorList>
    </citation>
    <scope>SIMILARITY TO YMOA</scope>
</reference>
<reference key="6">
    <citation type="journal article" date="1994" name="Mol. Microbiol.">
        <title>A new class of proteins regulating gene expression in enterobacteria.</title>
        <authorList>
            <person name="Mikulskis A.V."/>
            <person name="Cornelis G.R."/>
        </authorList>
    </citation>
    <scope>FUNCTION</scope>
    <scope>FUNCTION IN Y.ENTEROCOLITICA</scope>
    <source>
        <strain>K12 / C600 / CR34 / ATCC 23724 / DSM 3925 / LMG 3041 / NCIB 10222</strain>
    </source>
</reference>
<reference key="7">
    <citation type="journal article" date="1999" name="J. Bacteriol.">
        <title>Alterations in protein expression caused by the hha mutation in Escherichia coli: influence of growth medium osmolarity.</title>
        <authorList>
            <person name="Balsalobre C."/>
            <person name="Johansson J."/>
            <person name="Uhlin B.E."/>
            <person name="Juarez A."/>
            <person name="Munoa F.J."/>
        </authorList>
    </citation>
    <scope>DISRUPTION PHENOTYPE</scope>
    <source>
        <strain>5K</strain>
    </source>
</reference>
<reference key="8">
    <citation type="journal article" date="2000" name="Mol. Gen. Genet.">
        <title>Expression of the hemolysin operon in Escherichia coli is modulated by a nucleoid-protein complex that includes the proteins Hha and H-NS.</title>
        <authorList>
            <person name="Nieto J.M."/>
            <person name="Madrid C."/>
            <person name="Prenafeta A."/>
            <person name="Miquelay E."/>
            <person name="Balsalobre C."/>
            <person name="Carrascal M."/>
            <person name="Juarez A."/>
        </authorList>
    </citation>
    <scope>FUNCTION IN REGULATION OF THE HEMOLYSIN OPERON</scope>
    <scope>DNA-BINDING</scope>
    <scope>INTERACTION WITH H-NS</scope>
</reference>
<reference key="9">
    <citation type="journal article" date="2002" name="J. Bacteriol.">
        <title>Evidence for direct protein-protein interaction between members of the enterobacterial Hha/YmoA and H-NS families of proteins.</title>
        <authorList>
            <person name="Nieto J.M."/>
            <person name="Madrid C."/>
            <person name="Miquelay E."/>
            <person name="Parra J.L."/>
            <person name="Rodriguez S."/>
            <person name="Juarez A."/>
        </authorList>
    </citation>
    <scope>FUNCTION</scope>
    <scope>INTERACTION WITH H-NS</scope>
    <scope>DOMAIN</scope>
    <scope>MUTAGENESIS OF ARG-16; 44-TYR--ARG-72; ARG-50; 58-LYS--ARG-72; PRO-64 AND ARG-72</scope>
</reference>
<reference key="10">
    <citation type="journal article" date="2004" name="Appl. Microbiol. Biotechnol.">
        <title>Gene expression in Escherichia coli biofilms.</title>
        <authorList>
            <person name="Ren D."/>
            <person name="Bedzyk L.A."/>
            <person name="Thomas S.M."/>
            <person name="Ye R.W."/>
            <person name="Wood T.K."/>
        </authorList>
    </citation>
    <scope>INDUCTION</scope>
    <source>
        <strain>K12 / JM109 / ATCC 53323</strain>
    </source>
</reference>
<reference key="11">
    <citation type="journal article" date="2006" name="Biotechnol. Bioeng.">
        <title>Hha, YbaJ, and OmpA regulate Escherichia coli K12 biofilm formation and conjugation plasmids abolish motility.</title>
        <authorList>
            <person name="Barrios A.F."/>
            <person name="Zuo R."/>
            <person name="Ren D."/>
            <person name="Wood T.K."/>
        </authorList>
    </citation>
    <scope>FUNCTION IN BIOFILM FORMATION</scope>
    <scope>DISRUPTION PHENOTYPE</scope>
    <source>
        <strain>K12 / ATCC 25404 / DSM 5698 / NCIMB 11290</strain>
    </source>
</reference>
<reference key="12">
    <citation type="journal article" date="2006" name="J. Mol. Biol.">
        <title>New roles for key residues in helices H1 and H2 of the Escherichia coli H-NS N-terminal domain: H-NS dimer stabilization and Hha binding.</title>
        <authorList>
            <person name="Garcia J."/>
            <person name="Madrid C."/>
            <person name="Juarez A."/>
            <person name="Pons M."/>
        </authorList>
    </citation>
    <scope>SUBUNIT</scope>
</reference>
<reference key="13">
    <citation type="journal article" date="2008" name="PLoS ONE">
        <title>Protein translation and cell death: the role of rare tRNAs in biofilm formation and in activating dormant phage killer genes.</title>
        <authorList>
            <person name="Garcia-Contreras R."/>
            <person name="Zhang X.S."/>
            <person name="Kim Y."/>
            <person name="Wood T.K."/>
        </authorList>
    </citation>
    <scope>FUNCTION IN BIOFILM FORMATION</scope>
    <scope>INDUCTION</scope>
    <scope>DNA-BINDING</scope>
    <source>
        <strain>K12 / BW25113</strain>
    </source>
</reference>
<reference key="14">
    <citation type="journal article" date="2010" name="Biochem. Biophys. Res. Commun.">
        <title>Toxins Hha and CspD and small RNA regulator Hfq are involved in persister cell formation through MqsR in Escherichia coli.</title>
        <authorList>
            <person name="Kim Y."/>
            <person name="Wood T.K."/>
        </authorList>
    </citation>
    <scope>FUNCTION IN PERSISTER CELL FORMATION</scope>
    <scope>DISRUPTION PHENOTYPE</scope>
    <source>
        <strain>K12 / BW25113</strain>
    </source>
</reference>
<reference key="15">
    <citation type="journal article" date="2011" name="FEBS Lett.">
        <title>Essential residues in the H-NS binding site of Hha, a co-regulator of horizontally acquired genes in Enterobacteria.</title>
        <authorList>
            <person name="de Alba C.F."/>
            <person name="Solorzano C."/>
            <person name="Paytubi S."/>
            <person name="Madrid C."/>
            <person name="Juarez A."/>
            <person name="Garcia J."/>
            <person name="Pons M."/>
        </authorList>
    </citation>
    <scope>FUNCTION IN REGULATION OF THE HEMOLYSIN OPERON</scope>
    <scope>INTERACTION WITH H-NS</scope>
    <scope>MUTAGENESIS OF ASP-10; ASP-22; GLU-25; GLU-29; GLU-34; ASP-37; GLU-39; ASP-48 AND ASP-61</scope>
    <source>
        <strain>K12 / MG1655 / ATCC 47076</strain>
    </source>
</reference>
<reference key="16">
    <citation type="journal article" date="2013" name="DNA Res.">
        <title>Functions of the Hha and YdgT proteins in transcriptional silencing by the nucleoid proteins, H-NS and StpA, in Escherichia coli.</title>
        <authorList>
            <person name="Ueda T."/>
            <person name="Takahashi H."/>
            <person name="Uyar E."/>
            <person name="Ishikawa S."/>
            <person name="Ogasawara N."/>
            <person name="Oshima T."/>
        </authorList>
    </citation>
    <scope>FUNCTION</scope>
    <scope>REGULON</scope>
    <scope>DISRUPTION PHENOTYPE</scope>
    <source>
        <strain>K12 / W3110 / ATCC 27325 / DSM 5911</strain>
    </source>
</reference>
<reference key="17">
    <citation type="journal article" date="2002" name="Proc. Natl. Acad. Sci. U.S.A.">
        <title>An NMR approach to structural proteomics.</title>
        <authorList>
            <person name="Yee A."/>
            <person name="Chang X."/>
            <person name="Pineda-Lucena A."/>
            <person name="Wu B."/>
            <person name="Semesi A."/>
            <person name="Le B."/>
            <person name="Ramelot T."/>
            <person name="Lee G.M."/>
            <person name="Bhattacharyya S."/>
            <person name="Gutierrez P."/>
            <person name="Denisov A."/>
            <person name="Lee C.-H."/>
            <person name="Cort J.R."/>
            <person name="Kozlov G."/>
            <person name="Liao J."/>
            <person name="Finak G."/>
            <person name="Chen L."/>
            <person name="Wishart D."/>
            <person name="Lee W."/>
            <person name="McIntosh L.P."/>
            <person name="Gehring K."/>
            <person name="Kennedy M.A."/>
            <person name="Edwards A.M."/>
            <person name="Arrowsmith C.H."/>
        </authorList>
    </citation>
    <scope>STRUCTURE BY NMR</scope>
</reference>
<reference key="18">
    <citation type="journal article" date="2015" name="J. Biol. Chem.">
        <title>A three-protein charge zipper stabilizes a complex modulating bacterial gene silencing.</title>
        <authorList>
            <person name="Cordeiro T.N."/>
            <person name="Garcia J."/>
            <person name="Bernado P."/>
            <person name="Millet O."/>
            <person name="Pons M."/>
        </authorList>
    </citation>
    <scope>STRUCTURE BY NMR IN COMPLEX WITH H-NS</scope>
    <scope>SUBUNIT</scope>
</reference>
<proteinExistence type="evidence at protein level"/>
<name>HHA_ECOLI</name>
<accession>P0ACE3</accession>
<accession>P23870</accession>
<accession>P77120</accession>
<accession>Q2MBW7</accession>
<dbReference type="EMBL" id="X57977">
    <property type="protein sequence ID" value="CAA41043.1"/>
    <property type="molecule type" value="Genomic_DNA"/>
</dbReference>
<dbReference type="EMBL" id="U82664">
    <property type="protein sequence ID" value="AAB40215.1"/>
    <property type="status" value="ALT_INIT"/>
    <property type="molecule type" value="Genomic_DNA"/>
</dbReference>
<dbReference type="EMBL" id="U00096">
    <property type="protein sequence ID" value="AAC73562.1"/>
    <property type="molecule type" value="Genomic_DNA"/>
</dbReference>
<dbReference type="EMBL" id="AP009048">
    <property type="protein sequence ID" value="BAE76239.1"/>
    <property type="molecule type" value="Genomic_DNA"/>
</dbReference>
<dbReference type="PIR" id="C64776">
    <property type="entry name" value="C64776"/>
</dbReference>
<dbReference type="RefSeq" id="NP_414993.1">
    <property type="nucleotide sequence ID" value="NC_000913.3"/>
</dbReference>
<dbReference type="RefSeq" id="WP_001291435.1">
    <property type="nucleotide sequence ID" value="NZ_STEB01000007.1"/>
</dbReference>
<dbReference type="PDB" id="1JW2">
    <property type="method" value="NMR"/>
    <property type="chains" value="A=1-72"/>
</dbReference>
<dbReference type="PDB" id="2MW2">
    <property type="method" value="NMR"/>
    <property type="chains" value="A=1-72"/>
</dbReference>
<dbReference type="PDBsum" id="1JW2"/>
<dbReference type="PDBsum" id="2MW2"/>
<dbReference type="BMRB" id="P0ACE3"/>
<dbReference type="SMR" id="P0ACE3"/>
<dbReference type="BioGRID" id="4262034">
    <property type="interactions" value="72"/>
</dbReference>
<dbReference type="ComplexPortal" id="CPX-1979">
    <property type="entry name" value="H-NS-Hha transcription factor complex"/>
</dbReference>
<dbReference type="DIP" id="DIP-9897N"/>
<dbReference type="FunCoup" id="P0ACE3">
    <property type="interactions" value="43"/>
</dbReference>
<dbReference type="IntAct" id="P0ACE3">
    <property type="interactions" value="2"/>
</dbReference>
<dbReference type="MINT" id="P0ACE3"/>
<dbReference type="STRING" id="511145.b0460"/>
<dbReference type="PaxDb" id="511145-b0460"/>
<dbReference type="EnsemblBacteria" id="AAC73562">
    <property type="protein sequence ID" value="AAC73562"/>
    <property type="gene ID" value="b0460"/>
</dbReference>
<dbReference type="GeneID" id="945098"/>
<dbReference type="KEGG" id="ecj:JW0449"/>
<dbReference type="KEGG" id="eco:b0460"/>
<dbReference type="PATRIC" id="fig|511145.12.peg.478"/>
<dbReference type="EchoBASE" id="EB0434"/>
<dbReference type="eggNOG" id="ENOG5032SGA">
    <property type="taxonomic scope" value="Bacteria"/>
</dbReference>
<dbReference type="HOGENOM" id="CLU_190629_0_0_6"/>
<dbReference type="InParanoid" id="P0ACE3"/>
<dbReference type="OMA" id="RRCQSID"/>
<dbReference type="PhylomeDB" id="P0ACE3"/>
<dbReference type="BioCyc" id="EcoCyc:EG10439-MONOMER"/>
<dbReference type="EvolutionaryTrace" id="P0ACE3"/>
<dbReference type="PRO" id="PR:P0ACE3"/>
<dbReference type="Proteomes" id="UP000000625">
    <property type="component" value="Chromosome"/>
</dbReference>
<dbReference type="GO" id="GO:0005829">
    <property type="term" value="C:cytosol"/>
    <property type="evidence" value="ECO:0000314"/>
    <property type="project" value="EcoCyc"/>
</dbReference>
<dbReference type="GO" id="GO:0097495">
    <property type="term" value="C:H-NS-Hha complex"/>
    <property type="evidence" value="ECO:0000353"/>
    <property type="project" value="ComplexPortal"/>
</dbReference>
<dbReference type="GO" id="GO:0005667">
    <property type="term" value="C:transcription regulator complex"/>
    <property type="evidence" value="ECO:0000303"/>
    <property type="project" value="ComplexPortal"/>
</dbReference>
<dbReference type="GO" id="GO:0003677">
    <property type="term" value="F:DNA binding"/>
    <property type="evidence" value="ECO:0000314"/>
    <property type="project" value="EcoCyc"/>
</dbReference>
<dbReference type="GO" id="GO:0006355">
    <property type="term" value="P:regulation of DNA-templated transcription"/>
    <property type="evidence" value="ECO:0000303"/>
    <property type="project" value="ComplexPortal"/>
</dbReference>
<dbReference type="GO" id="GO:0010468">
    <property type="term" value="P:regulation of gene expression"/>
    <property type="evidence" value="ECO:0000315"/>
    <property type="project" value="EcoCyc"/>
</dbReference>
<dbReference type="FunFam" id="1.20.1280.40:FF:000001">
    <property type="entry name" value="Hemolysin expression modulator Hha"/>
    <property type="match status" value="1"/>
</dbReference>
<dbReference type="Gene3D" id="1.20.1280.40">
    <property type="entry name" value="HHA"/>
    <property type="match status" value="1"/>
</dbReference>
<dbReference type="InterPro" id="IPR007985">
    <property type="entry name" value="Hemolysn_expr_modulating_HHA"/>
</dbReference>
<dbReference type="InterPro" id="IPR036666">
    <property type="entry name" value="HHA_sf"/>
</dbReference>
<dbReference type="NCBIfam" id="NF008191">
    <property type="entry name" value="PRK10945.1"/>
    <property type="match status" value="1"/>
</dbReference>
<dbReference type="Pfam" id="PF05321">
    <property type="entry name" value="HHA"/>
    <property type="match status" value="1"/>
</dbReference>
<dbReference type="SUPFAM" id="SSF68989">
    <property type="entry name" value="Hemolysin expression modulating protein HHA"/>
    <property type="match status" value="1"/>
</dbReference>